<sequence>MKTIDLNCDSGESFGAYKMGNDDEILPFVSSINVACGFHAGDPSVMRQTIEKAMQHNVAIGAHPGFPDLIGFGRRNMNVSASEVYDYVLYQIGALDGFVKVAGGKMHHVKPHGALYNMAATNPEIADAIAKAIYHINPSLLLYGLANSEAFIQAAVKYNITLVQEAFADRTYKQDGTLTSRTEENALIKNEEEAIKQVLQMVKEGYVSAVNGEKVAVQAQTICLHGDGEKALQFAKRIYRTFEHDGISICAPK</sequence>
<comment type="function">
    <text evidence="1">Catalyzes the cleavage of 5-oxoproline to form L-glutamate coupled to the hydrolysis of ATP to ADP and inorganic phosphate.</text>
</comment>
<comment type="catalytic activity">
    <reaction evidence="1">
        <text>5-oxo-L-proline + ATP + 2 H2O = L-glutamate + ADP + phosphate + H(+)</text>
        <dbReference type="Rhea" id="RHEA:10348"/>
        <dbReference type="ChEBI" id="CHEBI:15377"/>
        <dbReference type="ChEBI" id="CHEBI:15378"/>
        <dbReference type="ChEBI" id="CHEBI:29985"/>
        <dbReference type="ChEBI" id="CHEBI:30616"/>
        <dbReference type="ChEBI" id="CHEBI:43474"/>
        <dbReference type="ChEBI" id="CHEBI:58402"/>
        <dbReference type="ChEBI" id="CHEBI:456216"/>
        <dbReference type="EC" id="3.5.2.9"/>
    </reaction>
</comment>
<comment type="subunit">
    <text evidence="1">Forms a complex composed of PxpA, PxpB and PxpC.</text>
</comment>
<comment type="similarity">
    <text evidence="1">Belongs to the LamB/PxpA family.</text>
</comment>
<name>PXPA_BACC4</name>
<organism>
    <name type="scientific">Bacillus cereus (strain B4264)</name>
    <dbReference type="NCBI Taxonomy" id="405532"/>
    <lineage>
        <taxon>Bacteria</taxon>
        <taxon>Bacillati</taxon>
        <taxon>Bacillota</taxon>
        <taxon>Bacilli</taxon>
        <taxon>Bacillales</taxon>
        <taxon>Bacillaceae</taxon>
        <taxon>Bacillus</taxon>
        <taxon>Bacillus cereus group</taxon>
    </lineage>
</organism>
<evidence type="ECO:0000255" key="1">
    <source>
        <dbReference type="HAMAP-Rule" id="MF_00691"/>
    </source>
</evidence>
<accession>B7H8H6</accession>
<protein>
    <recommendedName>
        <fullName evidence="1">5-oxoprolinase subunit A</fullName>
        <shortName evidence="1">5-OPase subunit A</shortName>
        <ecNumber evidence="1">3.5.2.9</ecNumber>
    </recommendedName>
    <alternativeName>
        <fullName evidence="1">5-oxoprolinase (ATP-hydrolyzing) subunit A</fullName>
    </alternativeName>
</protein>
<reference key="1">
    <citation type="submission" date="2008-10" db="EMBL/GenBank/DDBJ databases">
        <title>Genome sequence of Bacillus cereus B4264.</title>
        <authorList>
            <person name="Dodson R.J."/>
            <person name="Durkin A.S."/>
            <person name="Rosovitz M.J."/>
            <person name="Rasko D.A."/>
            <person name="Hoffmaster A."/>
            <person name="Ravel J."/>
            <person name="Sutton G."/>
        </authorList>
    </citation>
    <scope>NUCLEOTIDE SEQUENCE [LARGE SCALE GENOMIC DNA]</scope>
    <source>
        <strain>B4264</strain>
    </source>
</reference>
<feature type="chain" id="PRO_1000132039" description="5-oxoprolinase subunit A">
    <location>
        <begin position="1"/>
        <end position="253"/>
    </location>
</feature>
<proteinExistence type="inferred from homology"/>
<gene>
    <name evidence="1" type="primary">pxpA</name>
    <name type="ordered locus">BCB4264_A3086</name>
</gene>
<keyword id="KW-0067">ATP-binding</keyword>
<keyword id="KW-0378">Hydrolase</keyword>
<keyword id="KW-0547">Nucleotide-binding</keyword>
<dbReference type="EC" id="3.5.2.9" evidence="1"/>
<dbReference type="EMBL" id="CP001176">
    <property type="protein sequence ID" value="ACK63796.1"/>
    <property type="molecule type" value="Genomic_DNA"/>
</dbReference>
<dbReference type="RefSeq" id="WP_000848282.1">
    <property type="nucleotide sequence ID" value="NC_011725.1"/>
</dbReference>
<dbReference type="SMR" id="B7H8H6"/>
<dbReference type="KEGG" id="bcb:BCB4264_A3086"/>
<dbReference type="HOGENOM" id="CLU_069535_0_0_9"/>
<dbReference type="Proteomes" id="UP000007096">
    <property type="component" value="Chromosome"/>
</dbReference>
<dbReference type="GO" id="GO:0017168">
    <property type="term" value="F:5-oxoprolinase (ATP-hydrolyzing) activity"/>
    <property type="evidence" value="ECO:0007669"/>
    <property type="project" value="UniProtKB-UniRule"/>
</dbReference>
<dbReference type="GO" id="GO:0005524">
    <property type="term" value="F:ATP binding"/>
    <property type="evidence" value="ECO:0007669"/>
    <property type="project" value="UniProtKB-UniRule"/>
</dbReference>
<dbReference type="GO" id="GO:0005975">
    <property type="term" value="P:carbohydrate metabolic process"/>
    <property type="evidence" value="ECO:0007669"/>
    <property type="project" value="InterPro"/>
</dbReference>
<dbReference type="CDD" id="cd10787">
    <property type="entry name" value="LamB_YcsF_like"/>
    <property type="match status" value="1"/>
</dbReference>
<dbReference type="Gene3D" id="3.20.20.370">
    <property type="entry name" value="Glycoside hydrolase/deacetylase"/>
    <property type="match status" value="1"/>
</dbReference>
<dbReference type="HAMAP" id="MF_00691">
    <property type="entry name" value="PxpA"/>
    <property type="match status" value="1"/>
</dbReference>
<dbReference type="InterPro" id="IPR011330">
    <property type="entry name" value="Glyco_hydro/deAcase_b/a-brl"/>
</dbReference>
<dbReference type="InterPro" id="IPR005501">
    <property type="entry name" value="LamB/YcsF/PxpA-like"/>
</dbReference>
<dbReference type="NCBIfam" id="NF003813">
    <property type="entry name" value="PRK05406.1-2"/>
    <property type="match status" value="1"/>
</dbReference>
<dbReference type="NCBIfam" id="NF003814">
    <property type="entry name" value="PRK05406.1-3"/>
    <property type="match status" value="1"/>
</dbReference>
<dbReference type="NCBIfam" id="NF003816">
    <property type="entry name" value="PRK05406.1-5"/>
    <property type="match status" value="1"/>
</dbReference>
<dbReference type="PANTHER" id="PTHR30292:SF0">
    <property type="entry name" value="5-OXOPROLINASE SUBUNIT A"/>
    <property type="match status" value="1"/>
</dbReference>
<dbReference type="PANTHER" id="PTHR30292">
    <property type="entry name" value="UNCHARACTERIZED PROTEIN YBGL-RELATED"/>
    <property type="match status" value="1"/>
</dbReference>
<dbReference type="Pfam" id="PF03746">
    <property type="entry name" value="LamB_YcsF"/>
    <property type="match status" value="1"/>
</dbReference>
<dbReference type="SUPFAM" id="SSF88713">
    <property type="entry name" value="Glycoside hydrolase/deacetylase"/>
    <property type="match status" value="1"/>
</dbReference>